<organism>
    <name type="scientific">Bos taurus</name>
    <name type="common">Bovine</name>
    <dbReference type="NCBI Taxonomy" id="9913"/>
    <lineage>
        <taxon>Eukaryota</taxon>
        <taxon>Metazoa</taxon>
        <taxon>Chordata</taxon>
        <taxon>Craniata</taxon>
        <taxon>Vertebrata</taxon>
        <taxon>Euteleostomi</taxon>
        <taxon>Mammalia</taxon>
        <taxon>Eutheria</taxon>
        <taxon>Laurasiatheria</taxon>
        <taxon>Artiodactyla</taxon>
        <taxon>Ruminantia</taxon>
        <taxon>Pecora</taxon>
        <taxon>Bovidae</taxon>
        <taxon>Bovinae</taxon>
        <taxon>Bos</taxon>
    </lineage>
</organism>
<keyword id="KW-0053">Apoptosis</keyword>
<keyword id="KW-0256">Endoplasmic reticulum</keyword>
<keyword id="KW-0325">Glycoprotein</keyword>
<keyword id="KW-0445">Lipid transport</keyword>
<keyword id="KW-0472">Membrane</keyword>
<keyword id="KW-1185">Reference proteome</keyword>
<keyword id="KW-0812">Transmembrane</keyword>
<keyword id="KW-1133">Transmembrane helix</keyword>
<keyword id="KW-0813">Transport</keyword>
<accession>A2VE61</accession>
<proteinExistence type="evidence at transcript level"/>
<feature type="chain" id="PRO_0000331299" description="Lipid scramblase CLPTM1L">
    <location>
        <begin position="1"/>
        <end position="538"/>
    </location>
</feature>
<feature type="topological domain" description="Cytoplasmic" evidence="2">
    <location>
        <begin position="1"/>
        <end position="10"/>
    </location>
</feature>
<feature type="transmembrane region" description="Helical" evidence="2">
    <location>
        <begin position="11"/>
        <end position="31"/>
    </location>
</feature>
<feature type="topological domain" description="Extracellular" evidence="2">
    <location>
        <begin position="32"/>
        <end position="284"/>
    </location>
</feature>
<feature type="transmembrane region" description="Helical" evidence="2">
    <location>
        <begin position="285"/>
        <end position="305"/>
    </location>
</feature>
<feature type="topological domain" description="Cytoplasmic" evidence="2">
    <location>
        <begin position="306"/>
        <end position="324"/>
    </location>
</feature>
<feature type="transmembrane region" description="Helical" evidence="2">
    <location>
        <begin position="325"/>
        <end position="341"/>
    </location>
</feature>
<feature type="topological domain" description="Extracellular" evidence="2">
    <location>
        <begin position="342"/>
        <end position="402"/>
    </location>
</feature>
<feature type="transmembrane region" description="Helical" evidence="2">
    <location>
        <begin position="403"/>
        <end position="423"/>
    </location>
</feature>
<feature type="topological domain" description="Cytoplasmic" evidence="2">
    <location>
        <begin position="424"/>
        <end position="428"/>
    </location>
</feature>
<feature type="transmembrane region" description="Helical" evidence="2">
    <location>
        <begin position="429"/>
        <end position="449"/>
    </location>
</feature>
<feature type="topological domain" description="Extracellular" evidence="2">
    <location>
        <begin position="450"/>
        <end position="538"/>
    </location>
</feature>
<feature type="glycosylation site" description="N-linked (GlcNAc...) asparagine" evidence="2">
    <location>
        <position position="91"/>
    </location>
</feature>
<feature type="glycosylation site" description="N-linked (GlcNAc...) asparagine" evidence="2">
    <location>
        <position position="101"/>
    </location>
</feature>
<sequence>MWSGRSSFTSLVVGVFVVYVVHTCWVMYGIVYTRPCSGHGRCIQPYLAQRPKLQLSVYTTTRSNLGSENNVDLVLNVEDFDVESKFERTVNVSVPKKTRNNGTLYAYVFLHHAGVLPWNDAKQVHLVSPLTTYMVPRPEEVSLLAGGPAAQQIEAEKRPTSALDEPVSHWRPRLTLNVMVDNFVFDGASLPADVQRYMKMIQLGKTVQYLPILFIDQLSNRVKDLMVINRSSTELPLTVSYDKISLGRLRFWIHMQDAVYSLQQFGFSEKDADEVKGIFVDTNLYFLALTFFVAAFHLLFDFLAFKNDISFWKKKKSMIGMSTKAVLWRCFSTVVIFLFLLDEQTSLPVLVPAGIGAAIELWKVKKALKMTVIWRGLWPTFQFGTYSESERRTEEYDAQAMKYLSYLLYPLCIGGAIYSLLNIKYKSWYSWLINSFVNGVYAFGFLFMLPQLFVNYKMKSVAHLPWKAFTYKAFNTFIDDVFAFIITMPTSHRLACFRDDVVFLVYLYQRWLYPVDKSRVNEFGESYEDTPQRKPHTD</sequence>
<reference key="1">
    <citation type="submission" date="2007-02" db="EMBL/GenBank/DDBJ databases">
        <authorList>
            <consortium name="NIH - Mammalian Gene Collection (MGC) project"/>
        </authorList>
    </citation>
    <scope>NUCLEOTIDE SEQUENCE [LARGE SCALE MRNA]</scope>
    <source>
        <strain>Hereford</strain>
        <tissue>Fetal pons</tissue>
    </source>
</reference>
<protein>
    <recommendedName>
        <fullName evidence="3">Lipid scramblase CLPTM1L</fullName>
    </recommendedName>
    <alternativeName>
        <fullName evidence="1">Cisplatin resistance-related protein 9</fullName>
        <shortName>CRR9p</shortName>
    </alternativeName>
    <alternativeName>
        <fullName>Cleft lip and palate transmembrane protein 1-like protein</fullName>
        <shortName>CLPTM1-like protein</shortName>
    </alternativeName>
</protein>
<comment type="function">
    <text evidence="1">Scramblase that mediates the translocation of glucosaminylphosphatidylinositol (alpha-D-GlcN-(1-6)-(1,2-diacyl-sn-glycero-3-phospho)-1D-myo-inositol, GlcN-PI) across the endoplasmic reticulum (ER) membrane, from the cytosolic leaflet to the luminal leaflet of the ER membrane, where it participates in the biosynthesis of glycosylphosphatidylinositol (GPI). GPI is a lipid glycoconjugate involved in post-translational modification of proteins. Can also translocate 1,2-diacyl-sn-glycero-3-phospho-(1D-myo-inositol) (phosphatidylinositol or PI), as well as several other phospholipids (1,2-diacyl-sn-glycero-3-phosphocholine, 1,2-diacyl-sn-glycero-3-phosphoethanolamine), and N-acetylglucosaminylphosphatidylinositol (GlcNAc-PI) in vitro.</text>
</comment>
<comment type="catalytic activity">
    <reaction evidence="1">
        <text>a 6-(alpha-D-glucosaminyl)-1-(1,2-diacyl-sn-glycero-3-phospho)-1D-myo-inositol(in) = a 6-(alpha-D-glucosaminyl)-1-(1,2-diacyl-sn-glycero-3-phospho)-1D-myo-inositol(out)</text>
        <dbReference type="Rhea" id="RHEA:71491"/>
        <dbReference type="ChEBI" id="CHEBI:57997"/>
    </reaction>
</comment>
<comment type="catalytic activity">
    <reaction evidence="1">
        <text>6-(alpha-D-glucosaminyl)-(1-octadecanoyl,2-(9Z)-octadecenoyl-sn-glycero-3-phospho)-1D-myo-inositol(in) = 6-(alpha-D-glucosaminyl)-(1-octadecanoyl,2-(9Z)-octadecenoyl-sn-glycero-3-phospho)-1D-myo-inositol(out)</text>
        <dbReference type="Rhea" id="RHEA:71495"/>
        <dbReference type="ChEBI" id="CHEBI:190691"/>
    </reaction>
</comment>
<comment type="catalytic activity">
    <reaction evidence="1">
        <text>a 1,2-diacyl-sn-glycero-3-phospho-(1D-myo-inositol)(in) = a 1,2-diacyl-sn-glycero-3-phospho-(1D-myo-inositol)(out)</text>
        <dbReference type="Rhea" id="RHEA:38691"/>
        <dbReference type="ChEBI" id="CHEBI:57880"/>
    </reaction>
</comment>
<comment type="catalytic activity">
    <reaction evidence="1">
        <text>a 1,2-diacyl-sn-glycero-3-phosphocholine(in) = a 1,2-diacyl-sn-glycero-3-phosphocholine(out)</text>
        <dbReference type="Rhea" id="RHEA:38571"/>
        <dbReference type="ChEBI" id="CHEBI:57643"/>
    </reaction>
</comment>
<comment type="catalytic activity">
    <reaction evidence="1">
        <text>a 1,2-diacyl-sn-glycero-3-phosphoethanolamine(in) = a 1,2-diacyl-sn-glycero-3-phosphoethanolamine(out)</text>
        <dbReference type="Rhea" id="RHEA:38895"/>
        <dbReference type="ChEBI" id="CHEBI:64612"/>
    </reaction>
</comment>
<comment type="subcellular location">
    <subcellularLocation>
        <location evidence="3">Endoplasmic reticulum membrane</location>
        <topology evidence="2">Multi-pass membrane protein</topology>
    </subcellularLocation>
</comment>
<comment type="similarity">
    <text evidence="3">Belongs to the CLPTM1 family.</text>
</comment>
<gene>
    <name type="primary">CLPTM1L</name>
</gene>
<dbReference type="EMBL" id="BC133589">
    <property type="protein sequence ID" value="AAI33590.1"/>
    <property type="molecule type" value="mRNA"/>
</dbReference>
<dbReference type="RefSeq" id="NP_001075895.1">
    <property type="nucleotide sequence ID" value="NM_001082426.2"/>
</dbReference>
<dbReference type="FunCoup" id="A2VE61">
    <property type="interactions" value="2406"/>
</dbReference>
<dbReference type="STRING" id="9913.ENSBTAP00000001754"/>
<dbReference type="GlyCosmos" id="A2VE61">
    <property type="glycosylation" value="2 sites, No reported glycans"/>
</dbReference>
<dbReference type="GlyGen" id="A2VE61">
    <property type="glycosylation" value="2 sites"/>
</dbReference>
<dbReference type="PaxDb" id="9913-ENSBTAP00000001754"/>
<dbReference type="GeneID" id="506200"/>
<dbReference type="KEGG" id="bta:506200"/>
<dbReference type="CTD" id="81037"/>
<dbReference type="eggNOG" id="KOG2489">
    <property type="taxonomic scope" value="Eukaryota"/>
</dbReference>
<dbReference type="InParanoid" id="A2VE61"/>
<dbReference type="OrthoDB" id="378564at2759"/>
<dbReference type="Proteomes" id="UP000009136">
    <property type="component" value="Unplaced"/>
</dbReference>
<dbReference type="GO" id="GO:0012505">
    <property type="term" value="C:endomembrane system"/>
    <property type="evidence" value="ECO:0000318"/>
    <property type="project" value="GO_Central"/>
</dbReference>
<dbReference type="GO" id="GO:0005789">
    <property type="term" value="C:endoplasmic reticulum membrane"/>
    <property type="evidence" value="ECO:0000250"/>
    <property type="project" value="UniProtKB"/>
</dbReference>
<dbReference type="GO" id="GO:0016020">
    <property type="term" value="C:membrane"/>
    <property type="evidence" value="ECO:0000318"/>
    <property type="project" value="GO_Central"/>
</dbReference>
<dbReference type="GO" id="GO:0017128">
    <property type="term" value="F:phospholipid scramblase activity"/>
    <property type="evidence" value="ECO:0000250"/>
    <property type="project" value="UniProtKB"/>
</dbReference>
<dbReference type="GO" id="GO:0006915">
    <property type="term" value="P:apoptotic process"/>
    <property type="evidence" value="ECO:0007669"/>
    <property type="project" value="UniProtKB-KW"/>
</dbReference>
<dbReference type="InterPro" id="IPR008429">
    <property type="entry name" value="CLPTM1"/>
</dbReference>
<dbReference type="PANTHER" id="PTHR21347">
    <property type="entry name" value="CLEFT LIP AND PALATE ASSOCIATED TRANSMEMBRANE PROTEIN-RELATED"/>
    <property type="match status" value="1"/>
</dbReference>
<dbReference type="PANTHER" id="PTHR21347:SF0">
    <property type="entry name" value="LIPID SCRAMBLASE CLPTM1L"/>
    <property type="match status" value="1"/>
</dbReference>
<dbReference type="Pfam" id="PF05602">
    <property type="entry name" value="CLPTM1"/>
    <property type="match status" value="1"/>
</dbReference>
<name>CLP1L_BOVIN</name>
<evidence type="ECO:0000250" key="1">
    <source>
        <dbReference type="UniProtKB" id="Q96KA5"/>
    </source>
</evidence>
<evidence type="ECO:0000255" key="2"/>
<evidence type="ECO:0000305" key="3"/>